<comment type="function">
    <text evidence="1">Can catalyze the hydrolysis of ATP in the presence of single-stranded DNA, the ATP-dependent uptake of single-stranded DNA by duplex DNA, and the ATP-dependent hybridization of homologous single-stranded DNAs. It interacts with LexA causing its activation and leading to its autocatalytic cleavage.</text>
</comment>
<comment type="subcellular location">
    <subcellularLocation>
        <location evidence="1">Cytoplasm</location>
    </subcellularLocation>
</comment>
<comment type="similarity">
    <text evidence="1">Belongs to the RecA family.</text>
</comment>
<gene>
    <name evidence="1" type="primary">recA</name>
    <name type="ordered locus">HPSH_00775</name>
</gene>
<protein>
    <recommendedName>
        <fullName evidence="1">Protein RecA</fullName>
    </recommendedName>
    <alternativeName>
        <fullName evidence="1">Recombinase A</fullName>
    </alternativeName>
</protein>
<sequence length="347" mass="37683">MAIDEDKQKAISLAIKQIDKIFGKGALVRLGDKQVEKIDSISTGSLGLDLALGIGGVPKGRIIEIYGPESSGKTTLSLHIIAECQKNGGVCAFIDAEHALDVHYAKRLGVDTENLLVSQPDTGEQALEILETITRSGGIDLVVVDSVAALTPKAEIDGDMGDQHVGLQARLMSHALRKITGVLHKMNTTLIFINQIRMKIGMMGYGSPETTTGGNALKFYASVRIDIRRIAALKQNEQHIGNRAKAKVVKNKVAPPFREAEFDIMFGEGISKEGEIIDYGVKLDIVDKSGAWLSYQDKKLGQGRENAKALLKEDKALANEITLKIKESIGSNEEIMPLPDEPLEEME</sequence>
<proteinExistence type="inferred from homology"/>
<keyword id="KW-0067">ATP-binding</keyword>
<keyword id="KW-0963">Cytoplasm</keyword>
<keyword id="KW-0227">DNA damage</keyword>
<keyword id="KW-0233">DNA recombination</keyword>
<keyword id="KW-0234">DNA repair</keyword>
<keyword id="KW-0238">DNA-binding</keyword>
<keyword id="KW-0547">Nucleotide-binding</keyword>
<keyword id="KW-0742">SOS response</keyword>
<name>RECA_HELPS</name>
<accession>B2URY3</accession>
<feature type="chain" id="PRO_1000114340" description="Protein RecA">
    <location>
        <begin position="1"/>
        <end position="347"/>
    </location>
</feature>
<feature type="binding site" evidence="1">
    <location>
        <begin position="67"/>
        <end position="74"/>
    </location>
    <ligand>
        <name>ATP</name>
        <dbReference type="ChEBI" id="CHEBI:30616"/>
    </ligand>
</feature>
<dbReference type="EMBL" id="CP001072">
    <property type="protein sequence ID" value="ACD47615.1"/>
    <property type="molecule type" value="Genomic_DNA"/>
</dbReference>
<dbReference type="RefSeq" id="WP_000952094.1">
    <property type="nucleotide sequence ID" value="NC_010698.2"/>
</dbReference>
<dbReference type="SMR" id="B2URY3"/>
<dbReference type="KEGG" id="hps:HPSH_00775"/>
<dbReference type="HOGENOM" id="CLU_040469_1_2_7"/>
<dbReference type="GO" id="GO:0005829">
    <property type="term" value="C:cytosol"/>
    <property type="evidence" value="ECO:0007669"/>
    <property type="project" value="TreeGrafter"/>
</dbReference>
<dbReference type="GO" id="GO:0005524">
    <property type="term" value="F:ATP binding"/>
    <property type="evidence" value="ECO:0007669"/>
    <property type="project" value="UniProtKB-UniRule"/>
</dbReference>
<dbReference type="GO" id="GO:0016887">
    <property type="term" value="F:ATP hydrolysis activity"/>
    <property type="evidence" value="ECO:0007669"/>
    <property type="project" value="InterPro"/>
</dbReference>
<dbReference type="GO" id="GO:0140664">
    <property type="term" value="F:ATP-dependent DNA damage sensor activity"/>
    <property type="evidence" value="ECO:0007669"/>
    <property type="project" value="InterPro"/>
</dbReference>
<dbReference type="GO" id="GO:0003684">
    <property type="term" value="F:damaged DNA binding"/>
    <property type="evidence" value="ECO:0007669"/>
    <property type="project" value="UniProtKB-UniRule"/>
</dbReference>
<dbReference type="GO" id="GO:0003697">
    <property type="term" value="F:single-stranded DNA binding"/>
    <property type="evidence" value="ECO:0007669"/>
    <property type="project" value="UniProtKB-UniRule"/>
</dbReference>
<dbReference type="GO" id="GO:0006310">
    <property type="term" value="P:DNA recombination"/>
    <property type="evidence" value="ECO:0007669"/>
    <property type="project" value="UniProtKB-UniRule"/>
</dbReference>
<dbReference type="GO" id="GO:0006281">
    <property type="term" value="P:DNA repair"/>
    <property type="evidence" value="ECO:0007669"/>
    <property type="project" value="UniProtKB-UniRule"/>
</dbReference>
<dbReference type="GO" id="GO:0009432">
    <property type="term" value="P:SOS response"/>
    <property type="evidence" value="ECO:0007669"/>
    <property type="project" value="UniProtKB-UniRule"/>
</dbReference>
<dbReference type="CDD" id="cd00983">
    <property type="entry name" value="RecA"/>
    <property type="match status" value="1"/>
</dbReference>
<dbReference type="FunFam" id="3.40.50.300:FF:000087">
    <property type="entry name" value="Recombinase RecA"/>
    <property type="match status" value="1"/>
</dbReference>
<dbReference type="Gene3D" id="3.40.50.300">
    <property type="entry name" value="P-loop containing nucleotide triphosphate hydrolases"/>
    <property type="match status" value="1"/>
</dbReference>
<dbReference type="HAMAP" id="MF_00268">
    <property type="entry name" value="RecA"/>
    <property type="match status" value="1"/>
</dbReference>
<dbReference type="InterPro" id="IPR003593">
    <property type="entry name" value="AAA+_ATPase"/>
</dbReference>
<dbReference type="InterPro" id="IPR013765">
    <property type="entry name" value="DNA_recomb/repair_RecA"/>
</dbReference>
<dbReference type="InterPro" id="IPR020584">
    <property type="entry name" value="DNA_recomb/repair_RecA_CS"/>
</dbReference>
<dbReference type="InterPro" id="IPR027417">
    <property type="entry name" value="P-loop_NTPase"/>
</dbReference>
<dbReference type="InterPro" id="IPR049261">
    <property type="entry name" value="RecA-like_C"/>
</dbReference>
<dbReference type="InterPro" id="IPR049428">
    <property type="entry name" value="RecA-like_N"/>
</dbReference>
<dbReference type="InterPro" id="IPR020588">
    <property type="entry name" value="RecA_ATP-bd"/>
</dbReference>
<dbReference type="InterPro" id="IPR023400">
    <property type="entry name" value="RecA_C_sf"/>
</dbReference>
<dbReference type="InterPro" id="IPR020587">
    <property type="entry name" value="RecA_monomer-monomer_interface"/>
</dbReference>
<dbReference type="NCBIfam" id="TIGR02012">
    <property type="entry name" value="tigrfam_recA"/>
    <property type="match status" value="1"/>
</dbReference>
<dbReference type="PANTHER" id="PTHR45900:SF1">
    <property type="entry name" value="MITOCHONDRIAL DNA REPAIR PROTEIN RECA HOMOLOG-RELATED"/>
    <property type="match status" value="1"/>
</dbReference>
<dbReference type="PANTHER" id="PTHR45900">
    <property type="entry name" value="RECA"/>
    <property type="match status" value="1"/>
</dbReference>
<dbReference type="Pfam" id="PF00154">
    <property type="entry name" value="RecA"/>
    <property type="match status" value="1"/>
</dbReference>
<dbReference type="Pfam" id="PF21096">
    <property type="entry name" value="RecA_C"/>
    <property type="match status" value="1"/>
</dbReference>
<dbReference type="PRINTS" id="PR00142">
    <property type="entry name" value="RECA"/>
</dbReference>
<dbReference type="SMART" id="SM00382">
    <property type="entry name" value="AAA"/>
    <property type="match status" value="1"/>
</dbReference>
<dbReference type="SUPFAM" id="SSF52540">
    <property type="entry name" value="P-loop containing nucleoside triphosphate hydrolases"/>
    <property type="match status" value="1"/>
</dbReference>
<dbReference type="SUPFAM" id="SSF54752">
    <property type="entry name" value="RecA protein, C-terminal domain"/>
    <property type="match status" value="1"/>
</dbReference>
<dbReference type="PROSITE" id="PS00321">
    <property type="entry name" value="RECA_1"/>
    <property type="match status" value="1"/>
</dbReference>
<dbReference type="PROSITE" id="PS50162">
    <property type="entry name" value="RECA_2"/>
    <property type="match status" value="1"/>
</dbReference>
<dbReference type="PROSITE" id="PS50163">
    <property type="entry name" value="RECA_3"/>
    <property type="match status" value="1"/>
</dbReference>
<evidence type="ECO:0000255" key="1">
    <source>
        <dbReference type="HAMAP-Rule" id="MF_00268"/>
    </source>
</evidence>
<reference key="1">
    <citation type="submission" date="2008-05" db="EMBL/GenBank/DDBJ databases">
        <title>Genome sequence of Helicobacter pylori from the remote Amazon: traces of Asian ancestry of the first Americans.</title>
        <authorList>
            <person name="Kersulyte D."/>
            <person name="Kalia A."/>
            <person name="Gilman R.H."/>
            <person name="Berg D.E."/>
        </authorList>
    </citation>
    <scope>NUCLEOTIDE SEQUENCE [LARGE SCALE GENOMIC DNA]</scope>
    <source>
        <strain>Shi470</strain>
    </source>
</reference>
<organism>
    <name type="scientific">Helicobacter pylori (strain Shi470)</name>
    <dbReference type="NCBI Taxonomy" id="512562"/>
    <lineage>
        <taxon>Bacteria</taxon>
        <taxon>Pseudomonadati</taxon>
        <taxon>Campylobacterota</taxon>
        <taxon>Epsilonproteobacteria</taxon>
        <taxon>Campylobacterales</taxon>
        <taxon>Helicobacteraceae</taxon>
        <taxon>Helicobacter</taxon>
    </lineage>
</organism>